<evidence type="ECO:0000250" key="1"/>
<evidence type="ECO:0000269" key="2">
    <source>
    </source>
</evidence>
<evidence type="ECO:0000269" key="3">
    <source>
    </source>
</evidence>
<evidence type="ECO:0000305" key="4"/>
<name>IMP2_SOLLC</name>
<feature type="chain" id="PRO_0000142524" description="Inositol monophosphatase 2">
    <location>
        <begin position="1"/>
        <end position="265"/>
    </location>
</feature>
<feature type="binding site" evidence="1">
    <location>
        <position position="65"/>
    </location>
    <ligand>
        <name>Mg(2+)</name>
        <dbReference type="ChEBI" id="CHEBI:18420"/>
        <label>1</label>
    </ligand>
</feature>
<feature type="binding site" evidence="1">
    <location>
        <position position="65"/>
    </location>
    <ligand>
        <name>substrate</name>
    </ligand>
</feature>
<feature type="binding site" evidence="1">
    <location>
        <position position="86"/>
    </location>
    <ligand>
        <name>Mg(2+)</name>
        <dbReference type="ChEBI" id="CHEBI:18420"/>
        <label>1</label>
    </ligand>
</feature>
<feature type="binding site" evidence="1">
    <location>
        <position position="86"/>
    </location>
    <ligand>
        <name>Mg(2+)</name>
        <dbReference type="ChEBI" id="CHEBI:18420"/>
        <label>2</label>
    </ligand>
</feature>
<feature type="binding site" evidence="1">
    <location>
        <begin position="88"/>
        <end position="91"/>
    </location>
    <ligand>
        <name>substrate</name>
    </ligand>
</feature>
<feature type="binding site" evidence="1">
    <location>
        <position position="88"/>
    </location>
    <ligand>
        <name>Mg(2+)</name>
        <dbReference type="ChEBI" id="CHEBI:18420"/>
        <label>1</label>
    </ligand>
</feature>
<feature type="binding site" evidence="1">
    <location>
        <position position="89"/>
    </location>
    <ligand>
        <name>Mg(2+)</name>
        <dbReference type="ChEBI" id="CHEBI:18420"/>
        <label>2</label>
    </ligand>
</feature>
<feature type="binding site" evidence="1">
    <location>
        <begin position="189"/>
        <end position="191"/>
    </location>
    <ligand>
        <name>substrate</name>
    </ligand>
</feature>
<feature type="binding site" evidence="1">
    <location>
        <position position="208"/>
    </location>
    <ligand>
        <name>substrate</name>
    </ligand>
</feature>
<feature type="binding site" evidence="1">
    <location>
        <position position="216"/>
    </location>
    <ligand>
        <name>Mg(2+)</name>
        <dbReference type="ChEBI" id="CHEBI:18420"/>
        <label>2</label>
    </ligand>
</feature>
<feature type="binding site" evidence="1">
    <location>
        <position position="216"/>
    </location>
    <ligand>
        <name>substrate</name>
    </ligand>
</feature>
<feature type="sequence conflict" description="In Ref. 2; AAP15455." evidence="4" ref="2">
    <original>DV</original>
    <variation>EC</variation>
    <location>
        <begin position="6"/>
        <end position="7"/>
    </location>
</feature>
<feature type="sequence conflict" description="In Ref. 2; AAP15455." evidence="4" ref="2">
    <original>L</original>
    <variation>S</variation>
    <location>
        <position position="77"/>
    </location>
</feature>
<feature type="sequence conflict" description="In Ref. 2; AAP15455." evidence="4" ref="2">
    <original>DV</original>
    <variation>EC</variation>
    <location>
        <begin position="216"/>
        <end position="217"/>
    </location>
</feature>
<reference key="1">
    <citation type="journal article" date="1995" name="Plant Cell">
        <title>Plant inositol monophosphatase is a lithium-sensitive enzyme encoded by a multigene family.</title>
        <authorList>
            <person name="Gillaspy G.E."/>
            <person name="Keddie J.S."/>
            <person name="Oda K."/>
            <person name="Gruissem W."/>
        </authorList>
    </citation>
    <scope>NUCLEOTIDE SEQUENCE [MRNA]</scope>
    <scope>FUNCTION</scope>
    <scope>CATALYTIC ACTIVITY</scope>
    <scope>COFACTOR</scope>
    <scope>INDUCTION BY LITHIUM</scope>
    <scope>TISSUE SPECIFICITY</scope>
    <source>
        <strain>cv. VFNT Cherry</strain>
    </source>
</reference>
<reference key="2">
    <citation type="journal article" date="2004" name="Gene">
        <title>Genomic organization and regulation of the LeIMP-1 and LeIMP-2 genes encoding myo-inositol monophosphatase in tomato.</title>
        <authorList>
            <person name="Styer J.C."/>
            <person name="Keddie J."/>
            <person name="Spence J."/>
            <person name="Gillaspy G.E."/>
        </authorList>
    </citation>
    <scope>NUCLEOTIDE SEQUENCE [GENOMIC DNA]</scope>
    <scope>TISSUE SPECIFICITY</scope>
    <scope>INDUCTION BY INOSITOL AND LITHIUM</scope>
</reference>
<reference key="3">
    <citation type="journal article" date="2012" name="Nature">
        <title>The tomato genome sequence provides insights into fleshy fruit evolution.</title>
        <authorList>
            <consortium name="Tomato Genome Consortium"/>
        </authorList>
    </citation>
    <scope>NUCLEOTIDE SEQUENCE [LARGE SCALE GENOMIC DNA]</scope>
    <source>
        <strain>cv. Heinz 1706</strain>
    </source>
</reference>
<protein>
    <recommendedName>
        <fullName>Inositol monophosphatase 2</fullName>
        <shortName>IMP 2</shortName>
        <shortName>IMPase 2</shortName>
        <shortName>LeIMP2</shortName>
        <ecNumber>3.1.3.25</ecNumber>
    </recommendedName>
    <alternativeName>
        <fullName>Inositol-1(or 4)-monophosphatase 2</fullName>
    </alternativeName>
</protein>
<gene>
    <name type="primary">IMP2</name>
    <name type="synonym">IMP-2</name>
</gene>
<dbReference type="EC" id="3.1.3.25"/>
<dbReference type="EMBL" id="U39443">
    <property type="protein sequence ID" value="AAB19029.1"/>
    <property type="molecule type" value="mRNA"/>
</dbReference>
<dbReference type="EMBL" id="AY227667">
    <property type="protein sequence ID" value="AAP15455.1"/>
    <property type="molecule type" value="Genomic_DNA"/>
</dbReference>
<dbReference type="EMBL" id="AEKE02011759">
    <property type="status" value="NOT_ANNOTATED_CDS"/>
    <property type="molecule type" value="Genomic_DNA"/>
</dbReference>
<dbReference type="PIR" id="T07800">
    <property type="entry name" value="T07800"/>
</dbReference>
<dbReference type="RefSeq" id="NP_001233843.1">
    <property type="nucleotide sequence ID" value="NM_001246914.1"/>
</dbReference>
<dbReference type="SMR" id="P54927"/>
<dbReference type="FunCoup" id="P54927">
    <property type="interactions" value="1833"/>
</dbReference>
<dbReference type="STRING" id="4081.P54927"/>
<dbReference type="PaxDb" id="4081-Solyc03g044890.1.1"/>
<dbReference type="EnsemblPlants" id="Solyc03g044890.1.1">
    <property type="protein sequence ID" value="Solyc03g044890.1.1.1"/>
    <property type="gene ID" value="Solyc03g044890.1"/>
</dbReference>
<dbReference type="GeneID" id="544014"/>
<dbReference type="Gramene" id="Solyc03g044890.1.1">
    <property type="protein sequence ID" value="Solyc03g044890.1.1.1"/>
    <property type="gene ID" value="Solyc03g044890.1"/>
</dbReference>
<dbReference type="KEGG" id="sly:544014"/>
<dbReference type="eggNOG" id="KOG2951">
    <property type="taxonomic scope" value="Eukaryota"/>
</dbReference>
<dbReference type="HOGENOM" id="CLU_044118_1_0_1"/>
<dbReference type="InParanoid" id="P54927"/>
<dbReference type="OMA" id="FNVMKPD"/>
<dbReference type="OrthoDB" id="10254945at2759"/>
<dbReference type="PhylomeDB" id="P54927"/>
<dbReference type="UniPathway" id="UPA00823">
    <property type="reaction ID" value="UER00788"/>
</dbReference>
<dbReference type="Proteomes" id="UP000004994">
    <property type="component" value="Chromosome 3"/>
</dbReference>
<dbReference type="GO" id="GO:0008934">
    <property type="term" value="F:inositol monophosphate 1-phosphatase activity"/>
    <property type="evidence" value="ECO:0000318"/>
    <property type="project" value="GO_Central"/>
</dbReference>
<dbReference type="GO" id="GO:0052834">
    <property type="term" value="F:inositol monophosphate phosphatase activity"/>
    <property type="evidence" value="ECO:0000314"/>
    <property type="project" value="UniProtKB"/>
</dbReference>
<dbReference type="GO" id="GO:0000287">
    <property type="term" value="F:magnesium ion binding"/>
    <property type="evidence" value="ECO:0000314"/>
    <property type="project" value="UniProtKB"/>
</dbReference>
<dbReference type="GO" id="GO:0006021">
    <property type="term" value="P:inositol biosynthetic process"/>
    <property type="evidence" value="ECO:0000314"/>
    <property type="project" value="UniProtKB"/>
</dbReference>
<dbReference type="GO" id="GO:0006020">
    <property type="term" value="P:inositol metabolic process"/>
    <property type="evidence" value="ECO:0000318"/>
    <property type="project" value="GO_Central"/>
</dbReference>
<dbReference type="GO" id="GO:0046854">
    <property type="term" value="P:phosphatidylinositol phosphate biosynthetic process"/>
    <property type="evidence" value="ECO:0007669"/>
    <property type="project" value="InterPro"/>
</dbReference>
<dbReference type="GO" id="GO:0007165">
    <property type="term" value="P:signal transduction"/>
    <property type="evidence" value="ECO:0000318"/>
    <property type="project" value="GO_Central"/>
</dbReference>
<dbReference type="CDD" id="cd01639">
    <property type="entry name" value="IMPase"/>
    <property type="match status" value="1"/>
</dbReference>
<dbReference type="FunFam" id="3.30.540.10:FF:000004">
    <property type="entry name" value="Inositol-1-monophosphatase"/>
    <property type="match status" value="1"/>
</dbReference>
<dbReference type="FunFam" id="3.40.190.80:FF:000002">
    <property type="entry name" value="Inositol-1-monophosphatase"/>
    <property type="match status" value="1"/>
</dbReference>
<dbReference type="Gene3D" id="3.40.190.80">
    <property type="match status" value="1"/>
</dbReference>
<dbReference type="Gene3D" id="3.30.540.10">
    <property type="entry name" value="Fructose-1,6-Bisphosphatase, subunit A, domain 1"/>
    <property type="match status" value="1"/>
</dbReference>
<dbReference type="InterPro" id="IPR033942">
    <property type="entry name" value="IMPase"/>
</dbReference>
<dbReference type="InterPro" id="IPR020583">
    <property type="entry name" value="Inositol_monoP_metal-BS"/>
</dbReference>
<dbReference type="InterPro" id="IPR020552">
    <property type="entry name" value="Inositol_monoPase_Li-sen"/>
</dbReference>
<dbReference type="InterPro" id="IPR000760">
    <property type="entry name" value="Inositol_monophosphatase-like"/>
</dbReference>
<dbReference type="InterPro" id="IPR020550">
    <property type="entry name" value="Inositol_monophosphatase_CS"/>
</dbReference>
<dbReference type="PANTHER" id="PTHR20854">
    <property type="entry name" value="INOSITOL MONOPHOSPHATASE"/>
    <property type="match status" value="1"/>
</dbReference>
<dbReference type="PANTHER" id="PTHR20854:SF46">
    <property type="entry name" value="INOSITOL MONOPHOSPHATASE 2"/>
    <property type="match status" value="1"/>
</dbReference>
<dbReference type="Pfam" id="PF00459">
    <property type="entry name" value="Inositol_P"/>
    <property type="match status" value="1"/>
</dbReference>
<dbReference type="PRINTS" id="PR00377">
    <property type="entry name" value="IMPHPHTASES"/>
</dbReference>
<dbReference type="PRINTS" id="PR00378">
    <property type="entry name" value="LIIMPHPHTASE"/>
</dbReference>
<dbReference type="SUPFAM" id="SSF56655">
    <property type="entry name" value="Carbohydrate phosphatase"/>
    <property type="match status" value="1"/>
</dbReference>
<dbReference type="PROSITE" id="PS00629">
    <property type="entry name" value="IMP_1"/>
    <property type="match status" value="1"/>
</dbReference>
<dbReference type="PROSITE" id="PS00630">
    <property type="entry name" value="IMP_2"/>
    <property type="match status" value="1"/>
</dbReference>
<organism>
    <name type="scientific">Solanum lycopersicum</name>
    <name type="common">Tomato</name>
    <name type="synonym">Lycopersicon esculentum</name>
    <dbReference type="NCBI Taxonomy" id="4081"/>
    <lineage>
        <taxon>Eukaryota</taxon>
        <taxon>Viridiplantae</taxon>
        <taxon>Streptophyta</taxon>
        <taxon>Embryophyta</taxon>
        <taxon>Tracheophyta</taxon>
        <taxon>Spermatophyta</taxon>
        <taxon>Magnoliopsida</taxon>
        <taxon>eudicotyledons</taxon>
        <taxon>Gunneridae</taxon>
        <taxon>Pentapetalae</taxon>
        <taxon>asterids</taxon>
        <taxon>lamiids</taxon>
        <taxon>Solanales</taxon>
        <taxon>Solanaceae</taxon>
        <taxon>Solanoideae</taxon>
        <taxon>Solaneae</taxon>
        <taxon>Solanum</taxon>
        <taxon>Solanum subgen. Lycopersicon</taxon>
    </lineage>
</organism>
<sequence>MEEFVDVAIEAAKKAGEIIRHGFYKSKHIEHKGVVDLVTETDKACEVLIFNHLKQCFPSHKFIGEETTAAASGNFELTDEPTWIVDPLDGTTNFVHGFPFVCVSIGLTIEKKPVVGVVYNPIIDELFTAIYGRGAFLNGKSIRVSSESQLVKALVATEVGTNRDKAIVDATTGRINRVIFKVRSLRMSGSCALNLCGVACGRLDLFYEIEFGGPWDVAAGALIVIEAGGLVLDPSGSEFDLTARRVAATNAHLKDAFINALNESE</sequence>
<accession>P54927</accession>
<accession>Q84MJ6</accession>
<comment type="function">
    <text evidence="3">Responsible for the provision of inositol required for synthesis of phosphatidylinositol and polyphosphoinositides.</text>
</comment>
<comment type="catalytic activity">
    <reaction evidence="3">
        <text>a myo-inositol phosphate + H2O = myo-inositol + phosphate</text>
        <dbReference type="Rhea" id="RHEA:24056"/>
        <dbReference type="ChEBI" id="CHEBI:15377"/>
        <dbReference type="ChEBI" id="CHEBI:17268"/>
        <dbReference type="ChEBI" id="CHEBI:43474"/>
        <dbReference type="ChEBI" id="CHEBI:84139"/>
        <dbReference type="EC" id="3.1.3.25"/>
    </reaction>
</comment>
<comment type="cofactor">
    <cofactor evidence="3">
        <name>Mg(2+)</name>
        <dbReference type="ChEBI" id="CHEBI:18420"/>
    </cofactor>
</comment>
<comment type="pathway">
    <text>Polyol metabolism; myo-inositol biosynthesis; myo-inositol from D-glucose 6-phosphate: step 2/2.</text>
</comment>
<comment type="tissue specificity">
    <text evidence="2 3">Low expression in roots, stems, leaves, flowers and young and mature green fruits. Expressed in the stem/leaf junctions, below the shoot apex and on the abaxial side of the petiole of the first expanded leaflets.</text>
</comment>
<comment type="induction">
    <text evidence="2 3">Down-regulated by Li(+) and inositol.</text>
</comment>
<comment type="similarity">
    <text evidence="4">Belongs to the inositol monophosphatase superfamily.</text>
</comment>
<proteinExistence type="evidence at protein level"/>
<keyword id="KW-0378">Hydrolase</keyword>
<keyword id="KW-0452">Lithium</keyword>
<keyword id="KW-0460">Magnesium</keyword>
<keyword id="KW-0479">Metal-binding</keyword>
<keyword id="KW-1185">Reference proteome</keyword>